<name>YTRE_LEPBI</name>
<reference key="1">
    <citation type="journal article" date="1989" name="J. Bacteriol.">
        <title>Identification and nucleotide sequence of the Leptospira biflexa serovar patoc trpE and trpG genes.</title>
        <authorList>
            <person name="Yelton D.B."/>
            <person name="Peng S.L."/>
        </authorList>
    </citation>
    <scope>NUCLEOTIDE SEQUENCE [GENOMIC DNA]</scope>
    <source>
        <strain>Serovar Patoc</strain>
    </source>
</reference>
<feature type="chain" id="PRO_0000066534" description="Uncharacterized 22 kDa protein in trpE 5'region">
    <location>
        <begin position="1"/>
        <end position="189"/>
    </location>
</feature>
<proteinExistence type="inferred from homology"/>
<accession>P20464</accession>
<evidence type="ECO:0000305" key="1"/>
<protein>
    <recommendedName>
        <fullName>Uncharacterized 22 kDa protein in trpE 5'region</fullName>
    </recommendedName>
</protein>
<dbReference type="EMBL" id="M22468">
    <property type="protein sequence ID" value="AAA88215.1"/>
    <property type="molecule type" value="Genomic_DNA"/>
</dbReference>
<dbReference type="PIR" id="A32840">
    <property type="entry name" value="A32840"/>
</dbReference>
<dbReference type="SMR" id="P20464"/>
<dbReference type="GO" id="GO:0008934">
    <property type="term" value="F:inositol monophosphate 1-phosphatase activity"/>
    <property type="evidence" value="ECO:0007669"/>
    <property type="project" value="TreeGrafter"/>
</dbReference>
<dbReference type="GO" id="GO:0006020">
    <property type="term" value="P:inositol metabolic process"/>
    <property type="evidence" value="ECO:0007669"/>
    <property type="project" value="TreeGrafter"/>
</dbReference>
<dbReference type="GO" id="GO:0007165">
    <property type="term" value="P:signal transduction"/>
    <property type="evidence" value="ECO:0007669"/>
    <property type="project" value="TreeGrafter"/>
</dbReference>
<dbReference type="Gene3D" id="3.40.190.80">
    <property type="match status" value="1"/>
</dbReference>
<dbReference type="InterPro" id="IPR000760">
    <property type="entry name" value="Inositol_monophosphatase-like"/>
</dbReference>
<dbReference type="InterPro" id="IPR036324">
    <property type="entry name" value="Mn/Fe_SOD_N_sf"/>
</dbReference>
<dbReference type="PANTHER" id="PTHR20854">
    <property type="entry name" value="INOSITOL MONOPHOSPHATASE"/>
    <property type="match status" value="1"/>
</dbReference>
<dbReference type="PANTHER" id="PTHR20854:SF4">
    <property type="entry name" value="INOSITOL-1-MONOPHOSPHATASE-RELATED"/>
    <property type="match status" value="1"/>
</dbReference>
<dbReference type="Pfam" id="PF00459">
    <property type="entry name" value="Inositol_P"/>
    <property type="match status" value="1"/>
</dbReference>
<dbReference type="PRINTS" id="PR00377">
    <property type="entry name" value="IMPHPHTASES"/>
</dbReference>
<dbReference type="SUPFAM" id="SSF56655">
    <property type="entry name" value="Carbohydrate phosphatase"/>
    <property type="match status" value="1"/>
</dbReference>
<dbReference type="SUPFAM" id="SSF46609">
    <property type="entry name" value="Fe,Mn superoxide dismutase (SOD), N-terminal domain"/>
    <property type="match status" value="1"/>
</dbReference>
<organism>
    <name type="scientific">Leptospira biflexa</name>
    <dbReference type="NCBI Taxonomy" id="172"/>
    <lineage>
        <taxon>Bacteria</taxon>
        <taxon>Pseudomonadati</taxon>
        <taxon>Spirochaetota</taxon>
        <taxon>Spirochaetia</taxon>
        <taxon>Leptospirales</taxon>
        <taxon>Leptospiraceae</taxon>
        <taxon>Leptospira</taxon>
    </lineage>
</organism>
<sequence>MIQEIMADLSGFLTYARSFRRTGSFVLDACLHCRRCDGCRIWEKTVKHWDVSAISVILTEAGGKLTDLNGVHYYTGLPELVASNGVLHSEILNLLKTVRSTVSRKLIEGKRLESFYFFSLRFAFAIHTRYKIQLHLNPSGDRSWNINSQKASICKGCPSSAHFTETLEFHYGKHHQTYVTKPQQPNQRD</sequence>
<comment type="similarity">
    <text evidence="1">Belongs to the inositol monophosphatase superfamily.</text>
</comment>